<comment type="similarity">
    <text evidence="2">Belongs to the mycobacterial PPE family.</text>
</comment>
<organism>
    <name type="scientific">Mycobacterium tuberculosis (strain ATCC 25618 / H37Rv)</name>
    <dbReference type="NCBI Taxonomy" id="83332"/>
    <lineage>
        <taxon>Bacteria</taxon>
        <taxon>Bacillati</taxon>
        <taxon>Actinomycetota</taxon>
        <taxon>Actinomycetes</taxon>
        <taxon>Mycobacteriales</taxon>
        <taxon>Mycobacteriaceae</taxon>
        <taxon>Mycobacterium</taxon>
        <taxon>Mycobacterium tuberculosis complex</taxon>
    </lineage>
</organism>
<feature type="chain" id="PRO_0000379586" description="Uncharacterized PPE family protein PPE14">
    <location>
        <begin position="1"/>
        <end position="423"/>
    </location>
</feature>
<feature type="region of interest" description="Disordered" evidence="1">
    <location>
        <begin position="383"/>
        <end position="423"/>
    </location>
</feature>
<sequence>MDFGLLPPEVNSSRMYSGPGPESMLAAAAAWDGVAAELTSAAVSYGSVVSTLIVEPWMGPAAAAMAAAATPYVGWLAATAALAKETATQARAAAEAFGTAFAMTVPPSLVAANRSRLMSLVAANILGQNSAAIAATQAEYAEMWAQDAAVMYSYEGASAAASALPPFTPPVQGTGPAGPAAAAAATQAAGAGAVADAQATLAQLPPGILSDILSALAANADPLTSGLLGIASTLNPQVGSAQPIVIPTPIGELDVIALYIASIATGSIALAITNTARPWHIGLYGNAGGLGPTQGHPLSSATDEPEPHWGPFGGAAPVSAGVGHAALVGALSVPHSWTTAAPEIQLAVQATPTFSSSAGADPTALNGMPAGLLSGMALASLAARGTTGGGGTRSGTSTDGQEDGRKPPVVVIREQPPPGNPPR</sequence>
<protein>
    <recommendedName>
        <fullName>Uncharacterized PPE family protein PPE14</fullName>
    </recommendedName>
</protein>
<gene>
    <name type="primary">PPE14</name>
    <name type="ordered locus">Rv0915c</name>
</gene>
<accession>P9WI33</accession>
<accession>L0T7W5</accession>
<accession>Q79FV1</accession>
<accession>Q7D938</accession>
<name>PPE14_MYCTU</name>
<proteinExistence type="inferred from homology"/>
<keyword id="KW-1185">Reference proteome</keyword>
<dbReference type="EMBL" id="AL123456">
    <property type="protein sequence ID" value="CCP43663.1"/>
    <property type="molecule type" value="Genomic_DNA"/>
</dbReference>
<dbReference type="PIR" id="C70582">
    <property type="entry name" value="C70582"/>
</dbReference>
<dbReference type="RefSeq" id="WP_003404747.1">
    <property type="nucleotide sequence ID" value="NZ_NVQJ01000001.1"/>
</dbReference>
<dbReference type="RefSeq" id="YP_177765.1">
    <property type="nucleotide sequence ID" value="NC_000962.3"/>
</dbReference>
<dbReference type="SMR" id="P9WI33"/>
<dbReference type="STRING" id="83332.Rv0915c"/>
<dbReference type="PaxDb" id="83332-Rv0915c"/>
<dbReference type="DNASU" id="885069"/>
<dbReference type="GeneID" id="885069"/>
<dbReference type="KEGG" id="mtu:Rv0915c"/>
<dbReference type="KEGG" id="mtv:RVBD_0915c"/>
<dbReference type="TubercuList" id="Rv0915c"/>
<dbReference type="eggNOG" id="COG5651">
    <property type="taxonomic scope" value="Bacteria"/>
</dbReference>
<dbReference type="InParanoid" id="P9WI33"/>
<dbReference type="OrthoDB" id="4753505at2"/>
<dbReference type="Proteomes" id="UP000001584">
    <property type="component" value="Chromosome"/>
</dbReference>
<dbReference type="GO" id="GO:0052572">
    <property type="term" value="P:response to host immune response"/>
    <property type="evidence" value="ECO:0000318"/>
    <property type="project" value="GO_Central"/>
</dbReference>
<dbReference type="FunFam" id="1.20.1260.20:FF:000001">
    <property type="entry name" value="PPE family protein PPE41"/>
    <property type="match status" value="1"/>
</dbReference>
<dbReference type="Gene3D" id="1.20.1260.20">
    <property type="entry name" value="PPE superfamily"/>
    <property type="match status" value="1"/>
</dbReference>
<dbReference type="InterPro" id="IPR022171">
    <property type="entry name" value="PPE_C"/>
</dbReference>
<dbReference type="InterPro" id="IPR000030">
    <property type="entry name" value="PPE_dom"/>
</dbReference>
<dbReference type="InterPro" id="IPR038332">
    <property type="entry name" value="PPE_sf"/>
</dbReference>
<dbReference type="PANTHER" id="PTHR46766">
    <property type="entry name" value="GLUTAMINE-RICH PROTEIN 2"/>
    <property type="match status" value="1"/>
</dbReference>
<dbReference type="PANTHER" id="PTHR46766:SF1">
    <property type="entry name" value="GLUTAMINE-RICH PROTEIN 2"/>
    <property type="match status" value="1"/>
</dbReference>
<dbReference type="Pfam" id="PF00823">
    <property type="entry name" value="PPE"/>
    <property type="match status" value="1"/>
</dbReference>
<dbReference type="Pfam" id="PF12484">
    <property type="entry name" value="PPE-SVP"/>
    <property type="match status" value="1"/>
</dbReference>
<dbReference type="SUPFAM" id="SSF140459">
    <property type="entry name" value="PE/PPE dimer-like"/>
    <property type="match status" value="1"/>
</dbReference>
<evidence type="ECO:0000256" key="1">
    <source>
        <dbReference type="SAM" id="MobiDB-lite"/>
    </source>
</evidence>
<evidence type="ECO:0000305" key="2"/>
<reference key="1">
    <citation type="journal article" date="1998" name="Nature">
        <title>Deciphering the biology of Mycobacterium tuberculosis from the complete genome sequence.</title>
        <authorList>
            <person name="Cole S.T."/>
            <person name="Brosch R."/>
            <person name="Parkhill J."/>
            <person name="Garnier T."/>
            <person name="Churcher C.M."/>
            <person name="Harris D.E."/>
            <person name="Gordon S.V."/>
            <person name="Eiglmeier K."/>
            <person name="Gas S."/>
            <person name="Barry C.E. III"/>
            <person name="Tekaia F."/>
            <person name="Badcock K."/>
            <person name="Basham D."/>
            <person name="Brown D."/>
            <person name="Chillingworth T."/>
            <person name="Connor R."/>
            <person name="Davies R.M."/>
            <person name="Devlin K."/>
            <person name="Feltwell T."/>
            <person name="Gentles S."/>
            <person name="Hamlin N."/>
            <person name="Holroyd S."/>
            <person name="Hornsby T."/>
            <person name="Jagels K."/>
            <person name="Krogh A."/>
            <person name="McLean J."/>
            <person name="Moule S."/>
            <person name="Murphy L.D."/>
            <person name="Oliver S."/>
            <person name="Osborne J."/>
            <person name="Quail M.A."/>
            <person name="Rajandream M.A."/>
            <person name="Rogers J."/>
            <person name="Rutter S."/>
            <person name="Seeger K."/>
            <person name="Skelton S."/>
            <person name="Squares S."/>
            <person name="Squares R."/>
            <person name="Sulston J.E."/>
            <person name="Taylor K."/>
            <person name="Whitehead S."/>
            <person name="Barrell B.G."/>
        </authorList>
    </citation>
    <scope>NUCLEOTIDE SEQUENCE [LARGE SCALE GENOMIC DNA]</scope>
    <source>
        <strain>ATCC 25618 / H37Rv</strain>
    </source>
</reference>